<comment type="function">
    <text evidence="1">Probable cyclin-dependent protein kinase (CDK) inhibitor that functions as a repressor of mitosis in the endoreduplication cell cycle.</text>
</comment>
<comment type="sequence caution" evidence="5">
    <conflict type="erroneous termination">
        <sequence resource="EMBL-CDS" id="ABK28208"/>
    </conflict>
    <text>Extended C-terminus.</text>
</comment>
<accession>O80930</accession>
<accession>A0MES4</accession>
<accession>Q1PEW1</accession>
<keyword id="KW-0131">Cell cycle</keyword>
<keyword id="KW-0649">Protein kinase inhibitor</keyword>
<keyword id="KW-1185">Reference proteome</keyword>
<gene>
    <name evidence="3 4" type="primary">SMR12</name>
    <name evidence="6" type="ordered locus">At2g37610</name>
    <name evidence="7" type="ORF">F13M22.11</name>
</gene>
<evidence type="ECO:0000250" key="1">
    <source>
        <dbReference type="UniProtKB" id="Q9LZ78"/>
    </source>
</evidence>
<evidence type="ECO:0000256" key="2">
    <source>
        <dbReference type="SAM" id="MobiDB-lite"/>
    </source>
</evidence>
<evidence type="ECO:0000303" key="3">
    <source>
    </source>
</evidence>
<evidence type="ECO:0000303" key="4">
    <source>
    </source>
</evidence>
<evidence type="ECO:0000305" key="5"/>
<evidence type="ECO:0000312" key="6">
    <source>
        <dbReference type="Araport" id="AT2G37610"/>
    </source>
</evidence>
<evidence type="ECO:0000312" key="7">
    <source>
        <dbReference type="EMBL" id="AAC23631.1"/>
    </source>
</evidence>
<reference key="1">
    <citation type="journal article" date="1999" name="Nature">
        <title>Sequence and analysis of chromosome 2 of the plant Arabidopsis thaliana.</title>
        <authorList>
            <person name="Lin X."/>
            <person name="Kaul S."/>
            <person name="Rounsley S.D."/>
            <person name="Shea T.P."/>
            <person name="Benito M.-I."/>
            <person name="Town C.D."/>
            <person name="Fujii C.Y."/>
            <person name="Mason T.M."/>
            <person name="Bowman C.L."/>
            <person name="Barnstead M.E."/>
            <person name="Feldblyum T.V."/>
            <person name="Buell C.R."/>
            <person name="Ketchum K.A."/>
            <person name="Lee J.J."/>
            <person name="Ronning C.M."/>
            <person name="Koo H.L."/>
            <person name="Moffat K.S."/>
            <person name="Cronin L.A."/>
            <person name="Shen M."/>
            <person name="Pai G."/>
            <person name="Van Aken S."/>
            <person name="Umayam L."/>
            <person name="Tallon L.J."/>
            <person name="Gill J.E."/>
            <person name="Adams M.D."/>
            <person name="Carrera A.J."/>
            <person name="Creasy T.H."/>
            <person name="Goodman H.M."/>
            <person name="Somerville C.R."/>
            <person name="Copenhaver G.P."/>
            <person name="Preuss D."/>
            <person name="Nierman W.C."/>
            <person name="White O."/>
            <person name="Eisen J.A."/>
            <person name="Salzberg S.L."/>
            <person name="Fraser C.M."/>
            <person name="Venter J.C."/>
        </authorList>
    </citation>
    <scope>NUCLEOTIDE SEQUENCE [LARGE SCALE GENOMIC DNA]</scope>
    <source>
        <strain>cv. Columbia</strain>
    </source>
</reference>
<reference key="2">
    <citation type="journal article" date="2017" name="Plant J.">
        <title>Araport11: a complete reannotation of the Arabidopsis thaliana reference genome.</title>
        <authorList>
            <person name="Cheng C.Y."/>
            <person name="Krishnakumar V."/>
            <person name="Chan A.P."/>
            <person name="Thibaud-Nissen F."/>
            <person name="Schobel S."/>
            <person name="Town C.D."/>
        </authorList>
    </citation>
    <scope>GENOME REANNOTATION</scope>
    <source>
        <strain>cv. Columbia</strain>
    </source>
</reference>
<reference key="3">
    <citation type="journal article" date="2006" name="Plant Biotechnol. J.">
        <title>Simultaneous high-throughput recombinational cloning of open reading frames in closed and open configurations.</title>
        <authorList>
            <person name="Underwood B.A."/>
            <person name="Vanderhaeghen R."/>
            <person name="Whitford R."/>
            <person name="Town C.D."/>
            <person name="Hilson P."/>
        </authorList>
    </citation>
    <scope>NUCLEOTIDE SEQUENCE [LARGE SCALE GENOMIC DNA] OF 41-161</scope>
    <source>
        <strain>cv. Columbia</strain>
    </source>
</reference>
<reference key="4">
    <citation type="journal article" date="2014" name="Plant Cell">
        <title>The Arabidopsis SIAMESE-RELATED cyclin-dependent kinase inhibitors SMR5 and SMR7 regulate the DNA damage checkpoint in response to reactive oxygen species.</title>
        <authorList>
            <person name="Yi D."/>
            <person name="Alvim Kamei C.L."/>
            <person name="Cools T."/>
            <person name="Vanderauwera S."/>
            <person name="Takahashi N."/>
            <person name="Okushima Y."/>
            <person name="Eekhout T."/>
            <person name="Yoshiyama K.O."/>
            <person name="Larkin J."/>
            <person name="Van den Daele H."/>
            <person name="Conklin P."/>
            <person name="Britt A."/>
            <person name="Umeda M."/>
            <person name="De Veylder L."/>
        </authorList>
    </citation>
    <scope>GENE FAMILY</scope>
    <scope>NOMENCLATURE</scope>
</reference>
<reference key="5">
    <citation type="journal article" date="2015" name="Plant Cell">
        <title>Functional conservation in the SIAMESE-RELATED family of cyclin-dependent kinase inhibitors in land plants.</title>
        <authorList>
            <person name="Kumar N."/>
            <person name="Harashima H."/>
            <person name="Kalve S."/>
            <person name="Bramsiepe J."/>
            <person name="Wang K."/>
            <person name="Sizani B.L."/>
            <person name="Bertrand L.L."/>
            <person name="Johnson M.C."/>
            <person name="Faulk C."/>
            <person name="Dale R."/>
            <person name="Simmons L.A."/>
            <person name="Churchman M.L."/>
            <person name="Sugimoto K."/>
            <person name="Kato N."/>
            <person name="Dasanayake M."/>
            <person name="Beemster G."/>
            <person name="Schnittger A."/>
            <person name="Larkin J.C."/>
        </authorList>
    </citation>
    <scope>GENE FAMILY</scope>
    <scope>NOMENCLATURE</scope>
</reference>
<dbReference type="EMBL" id="AC004684">
    <property type="protein sequence ID" value="AAC23631.1"/>
    <property type="molecule type" value="Genomic_DNA"/>
</dbReference>
<dbReference type="EMBL" id="CP002685">
    <property type="protein sequence ID" value="AEC09425.1"/>
    <property type="molecule type" value="Genomic_DNA"/>
</dbReference>
<dbReference type="EMBL" id="DQ446606">
    <property type="protein sequence ID" value="ABE65471.1"/>
    <property type="molecule type" value="Genomic_DNA"/>
</dbReference>
<dbReference type="EMBL" id="DQ653046">
    <property type="protein sequence ID" value="ABK28208.1"/>
    <property type="status" value="ALT_SEQ"/>
    <property type="molecule type" value="Genomic_DNA"/>
</dbReference>
<dbReference type="PIR" id="T02527">
    <property type="entry name" value="T02527"/>
</dbReference>
<dbReference type="RefSeq" id="NP_181297.1">
    <property type="nucleotide sequence ID" value="NM_129317.2"/>
</dbReference>
<dbReference type="FunCoup" id="O80930">
    <property type="interactions" value="3"/>
</dbReference>
<dbReference type="STRING" id="3702.O80930"/>
<dbReference type="PaxDb" id="3702-AT2G37610.1"/>
<dbReference type="EnsemblPlants" id="AT2G37610.1">
    <property type="protein sequence ID" value="AT2G37610.1"/>
    <property type="gene ID" value="AT2G37610"/>
</dbReference>
<dbReference type="GeneID" id="818338"/>
<dbReference type="Gramene" id="AT2G37610.1">
    <property type="protein sequence ID" value="AT2G37610.1"/>
    <property type="gene ID" value="AT2G37610"/>
</dbReference>
<dbReference type="KEGG" id="ath:AT2G37610"/>
<dbReference type="Araport" id="AT2G37610"/>
<dbReference type="TAIR" id="AT2G37610">
    <property type="gene designation" value="SMR12"/>
</dbReference>
<dbReference type="eggNOG" id="ENOG502R1Q4">
    <property type="taxonomic scope" value="Eukaryota"/>
</dbReference>
<dbReference type="HOGENOM" id="CLU_139385_0_0_1"/>
<dbReference type="InParanoid" id="O80930"/>
<dbReference type="OMA" id="ENRIPEM"/>
<dbReference type="PhylomeDB" id="O80930"/>
<dbReference type="PRO" id="PR:O80930"/>
<dbReference type="Proteomes" id="UP000006548">
    <property type="component" value="Chromosome 2"/>
</dbReference>
<dbReference type="ExpressionAtlas" id="O80930">
    <property type="expression patterns" value="baseline and differential"/>
</dbReference>
<dbReference type="GO" id="GO:0004860">
    <property type="term" value="F:protein kinase inhibitor activity"/>
    <property type="evidence" value="ECO:0007669"/>
    <property type="project" value="UniProtKB-KW"/>
</dbReference>
<dbReference type="GO" id="GO:0032875">
    <property type="term" value="P:regulation of DNA endoreduplication"/>
    <property type="evidence" value="ECO:0007669"/>
    <property type="project" value="InterPro"/>
</dbReference>
<dbReference type="InterPro" id="IPR040389">
    <property type="entry name" value="SMR"/>
</dbReference>
<dbReference type="PANTHER" id="PTHR33142:SF111">
    <property type="entry name" value="CYCLIN-DEPENDENT PROTEIN KINASE INHIBITOR SMR12"/>
    <property type="match status" value="1"/>
</dbReference>
<dbReference type="PANTHER" id="PTHR33142">
    <property type="entry name" value="CYCLIN-DEPENDENT PROTEIN KINASE INHIBITOR SMR13"/>
    <property type="match status" value="1"/>
</dbReference>
<name>SMR12_ARATH</name>
<protein>
    <recommendedName>
        <fullName evidence="3 4">Cyclin-dependent protein kinase inhibitor SMR12</fullName>
    </recommendedName>
    <alternativeName>
        <fullName evidence="3 4">Protein SIAMESE-RELATED 12</fullName>
    </alternativeName>
</protein>
<proteinExistence type="inferred from homology"/>
<organism>
    <name type="scientific">Arabidopsis thaliana</name>
    <name type="common">Mouse-ear cress</name>
    <dbReference type="NCBI Taxonomy" id="3702"/>
    <lineage>
        <taxon>Eukaryota</taxon>
        <taxon>Viridiplantae</taxon>
        <taxon>Streptophyta</taxon>
        <taxon>Embryophyta</taxon>
        <taxon>Tracheophyta</taxon>
        <taxon>Spermatophyta</taxon>
        <taxon>Magnoliopsida</taxon>
        <taxon>eudicotyledons</taxon>
        <taxon>Gunneridae</taxon>
        <taxon>Pentapetalae</taxon>
        <taxon>rosids</taxon>
        <taxon>malvids</taxon>
        <taxon>Brassicales</taxon>
        <taxon>Brassicaceae</taxon>
        <taxon>Camelineae</taxon>
        <taxon>Arabidopsis</taxon>
    </lineage>
</organism>
<feature type="chain" id="PRO_0000438471" description="Cyclin-dependent protein kinase inhibitor SMR12">
    <location>
        <begin position="1"/>
        <end position="161"/>
    </location>
</feature>
<feature type="region of interest" description="Disordered" evidence="2">
    <location>
        <begin position="84"/>
        <end position="106"/>
    </location>
</feature>
<feature type="compositionally biased region" description="Acidic residues" evidence="2">
    <location>
        <begin position="84"/>
        <end position="93"/>
    </location>
</feature>
<sequence length="161" mass="19129">MEIGNVKADVNLVLNLREAERHRRYFDYFIDEILWLSFLGMSETSLKEEEVTLGGVKETREEECSDDKLVLDICLKRKRLDEEEEEEVVEEENDGFKTPTRPENRIPIVRECPPAPMKRSSEMFRGRTMYCRRRLSFLPEDDVNSFITDLQWRTTTMTIKK</sequence>